<sequence>MTNKYLVEGSENELTTKTAAELAGLIHSREVTSREVTQAHLDRIAAVDGDIHAFLHVGQEEALNAADDVDKRLDAGEAPASALAGVPLALKDVFTTTDAPTTAASKMLEGYMSPYDATVTRKIREAGIPILGKTNMDEFAMGSSTENSAYGPTHNPWDLERTAGGSGGGSSAALAAGQAPLAIGTDTGGSIRQPAALTNTVGVKPTYGTVSRYGLIACASSLDQGGPTARTVLDTALLHEVIAGHDGFDATSVNRPVAPVVQAAREGANGDLKGMKVGVVKQFDRDGYQPGVLEAFHASVEQMRSQGAEIVEVDCPHFDDALGAYYLILPCEVSSNLARFDGMRYGLRAGDDGTRSADEVMAYTRAQGFGPEVKRRIILGTYALSVGYYDAYYLQAQRVRTLIAQDFAKAYEQVDILVSPTTPTTAFKLGEKVTDPLEMYNFDLCTLPLNLAGLAGMSLPSGLASDTGLPVGLQLMAPAFQDDRLYRVGAAFEAGRK</sequence>
<dbReference type="EC" id="6.3.5.7" evidence="1"/>
<dbReference type="EMBL" id="AP009044">
    <property type="protein sequence ID" value="BAF54305.1"/>
    <property type="molecule type" value="Genomic_DNA"/>
</dbReference>
<dbReference type="RefSeq" id="WP_006285038.1">
    <property type="nucleotide sequence ID" value="NC_009342.1"/>
</dbReference>
<dbReference type="SMR" id="A4QDK8"/>
<dbReference type="KEGG" id="cgt:cgR_1324"/>
<dbReference type="HOGENOM" id="CLU_009600_0_3_11"/>
<dbReference type="PhylomeDB" id="A4QDK8"/>
<dbReference type="Proteomes" id="UP000006698">
    <property type="component" value="Chromosome"/>
</dbReference>
<dbReference type="GO" id="GO:0030956">
    <property type="term" value="C:glutamyl-tRNA(Gln) amidotransferase complex"/>
    <property type="evidence" value="ECO:0007669"/>
    <property type="project" value="InterPro"/>
</dbReference>
<dbReference type="GO" id="GO:0005524">
    <property type="term" value="F:ATP binding"/>
    <property type="evidence" value="ECO:0007669"/>
    <property type="project" value="UniProtKB-KW"/>
</dbReference>
<dbReference type="GO" id="GO:0050567">
    <property type="term" value="F:glutaminyl-tRNA synthase (glutamine-hydrolyzing) activity"/>
    <property type="evidence" value="ECO:0007669"/>
    <property type="project" value="UniProtKB-UniRule"/>
</dbReference>
<dbReference type="GO" id="GO:0006412">
    <property type="term" value="P:translation"/>
    <property type="evidence" value="ECO:0007669"/>
    <property type="project" value="UniProtKB-UniRule"/>
</dbReference>
<dbReference type="Gene3D" id="3.90.1300.10">
    <property type="entry name" value="Amidase signature (AS) domain"/>
    <property type="match status" value="1"/>
</dbReference>
<dbReference type="HAMAP" id="MF_00120">
    <property type="entry name" value="GatA"/>
    <property type="match status" value="1"/>
</dbReference>
<dbReference type="InterPro" id="IPR000120">
    <property type="entry name" value="Amidase"/>
</dbReference>
<dbReference type="InterPro" id="IPR020556">
    <property type="entry name" value="Amidase_CS"/>
</dbReference>
<dbReference type="InterPro" id="IPR023631">
    <property type="entry name" value="Amidase_dom"/>
</dbReference>
<dbReference type="InterPro" id="IPR036928">
    <property type="entry name" value="AS_sf"/>
</dbReference>
<dbReference type="InterPro" id="IPR004412">
    <property type="entry name" value="GatA"/>
</dbReference>
<dbReference type="NCBIfam" id="TIGR00132">
    <property type="entry name" value="gatA"/>
    <property type="match status" value="1"/>
</dbReference>
<dbReference type="PANTHER" id="PTHR11895:SF151">
    <property type="entry name" value="GLUTAMYL-TRNA(GLN) AMIDOTRANSFERASE SUBUNIT A"/>
    <property type="match status" value="1"/>
</dbReference>
<dbReference type="PANTHER" id="PTHR11895">
    <property type="entry name" value="TRANSAMIDASE"/>
    <property type="match status" value="1"/>
</dbReference>
<dbReference type="Pfam" id="PF01425">
    <property type="entry name" value="Amidase"/>
    <property type="match status" value="1"/>
</dbReference>
<dbReference type="SUPFAM" id="SSF75304">
    <property type="entry name" value="Amidase signature (AS) enzymes"/>
    <property type="match status" value="1"/>
</dbReference>
<dbReference type="PROSITE" id="PS00571">
    <property type="entry name" value="AMIDASES"/>
    <property type="match status" value="1"/>
</dbReference>
<protein>
    <recommendedName>
        <fullName evidence="1">Glutamyl-tRNA(Gln) amidotransferase subunit A</fullName>
        <shortName evidence="1">Glu-ADT subunit A</shortName>
        <ecNumber evidence="1">6.3.5.7</ecNumber>
    </recommendedName>
</protein>
<feature type="chain" id="PRO_1000015826" description="Glutamyl-tRNA(Gln) amidotransferase subunit A">
    <location>
        <begin position="1"/>
        <end position="497"/>
    </location>
</feature>
<feature type="region of interest" description="Disordered" evidence="2">
    <location>
        <begin position="143"/>
        <end position="171"/>
    </location>
</feature>
<feature type="active site" description="Charge relay system" evidence="1">
    <location>
        <position position="91"/>
    </location>
</feature>
<feature type="active site" description="Charge relay system" evidence="1">
    <location>
        <position position="166"/>
    </location>
</feature>
<feature type="active site" description="Acyl-ester intermediate" evidence="1">
    <location>
        <position position="190"/>
    </location>
</feature>
<evidence type="ECO:0000255" key="1">
    <source>
        <dbReference type="HAMAP-Rule" id="MF_00120"/>
    </source>
</evidence>
<evidence type="ECO:0000256" key="2">
    <source>
        <dbReference type="SAM" id="MobiDB-lite"/>
    </source>
</evidence>
<comment type="function">
    <text evidence="1">Allows the formation of correctly charged Gln-tRNA(Gln) through the transamidation of misacylated Glu-tRNA(Gln) in organisms which lack glutaminyl-tRNA synthetase. The reaction takes place in the presence of glutamine and ATP through an activated gamma-phospho-Glu-tRNA(Gln).</text>
</comment>
<comment type="catalytic activity">
    <reaction evidence="1">
        <text>L-glutamyl-tRNA(Gln) + L-glutamine + ATP + H2O = L-glutaminyl-tRNA(Gln) + L-glutamate + ADP + phosphate + H(+)</text>
        <dbReference type="Rhea" id="RHEA:17521"/>
        <dbReference type="Rhea" id="RHEA-COMP:9681"/>
        <dbReference type="Rhea" id="RHEA-COMP:9684"/>
        <dbReference type="ChEBI" id="CHEBI:15377"/>
        <dbReference type="ChEBI" id="CHEBI:15378"/>
        <dbReference type="ChEBI" id="CHEBI:29985"/>
        <dbReference type="ChEBI" id="CHEBI:30616"/>
        <dbReference type="ChEBI" id="CHEBI:43474"/>
        <dbReference type="ChEBI" id="CHEBI:58359"/>
        <dbReference type="ChEBI" id="CHEBI:78520"/>
        <dbReference type="ChEBI" id="CHEBI:78521"/>
        <dbReference type="ChEBI" id="CHEBI:456216"/>
        <dbReference type="EC" id="6.3.5.7"/>
    </reaction>
</comment>
<comment type="subunit">
    <text evidence="1">Heterotrimer of A, B and C subunits.</text>
</comment>
<comment type="similarity">
    <text evidence="1">Belongs to the amidase family. GatA subfamily.</text>
</comment>
<keyword id="KW-0067">ATP-binding</keyword>
<keyword id="KW-0436">Ligase</keyword>
<keyword id="KW-0547">Nucleotide-binding</keyword>
<keyword id="KW-0648">Protein biosynthesis</keyword>
<accession>A4QDK8</accession>
<organism>
    <name type="scientific">Corynebacterium glutamicum (strain R)</name>
    <dbReference type="NCBI Taxonomy" id="340322"/>
    <lineage>
        <taxon>Bacteria</taxon>
        <taxon>Bacillati</taxon>
        <taxon>Actinomycetota</taxon>
        <taxon>Actinomycetes</taxon>
        <taxon>Mycobacteriales</taxon>
        <taxon>Corynebacteriaceae</taxon>
        <taxon>Corynebacterium</taxon>
    </lineage>
</organism>
<reference key="1">
    <citation type="journal article" date="2007" name="Microbiology">
        <title>Comparative analysis of the Corynebacterium glutamicum group and complete genome sequence of strain R.</title>
        <authorList>
            <person name="Yukawa H."/>
            <person name="Omumasaba C.A."/>
            <person name="Nonaka H."/>
            <person name="Kos P."/>
            <person name="Okai N."/>
            <person name="Suzuki N."/>
            <person name="Suda M."/>
            <person name="Tsuge Y."/>
            <person name="Watanabe J."/>
            <person name="Ikeda Y."/>
            <person name="Vertes A.A."/>
            <person name="Inui M."/>
        </authorList>
    </citation>
    <scope>NUCLEOTIDE SEQUENCE [LARGE SCALE GENOMIC DNA]</scope>
    <source>
        <strain>R</strain>
    </source>
</reference>
<proteinExistence type="inferred from homology"/>
<gene>
    <name evidence="1" type="primary">gatA</name>
    <name type="ordered locus">cgR_1324</name>
</gene>
<name>GATA_CORGB</name>